<dbReference type="EMBL" id="CP000720">
    <property type="protein sequence ID" value="ABS46864.1"/>
    <property type="molecule type" value="Genomic_DNA"/>
</dbReference>
<dbReference type="RefSeq" id="WP_002211347.1">
    <property type="nucleotide sequence ID" value="NC_009708.1"/>
</dbReference>
<dbReference type="SMR" id="A7FJZ1"/>
<dbReference type="GeneID" id="98387575"/>
<dbReference type="KEGG" id="ypi:YpsIP31758_2604"/>
<dbReference type="HOGENOM" id="CLU_151267_1_0_6"/>
<dbReference type="Proteomes" id="UP000002412">
    <property type="component" value="Chromosome"/>
</dbReference>
<dbReference type="GO" id="GO:0005829">
    <property type="term" value="C:cytosol"/>
    <property type="evidence" value="ECO:0007669"/>
    <property type="project" value="TreeGrafter"/>
</dbReference>
<dbReference type="GO" id="GO:0043022">
    <property type="term" value="F:ribosome binding"/>
    <property type="evidence" value="ECO:0007669"/>
    <property type="project" value="UniProtKB-UniRule"/>
</dbReference>
<dbReference type="GO" id="GO:0019843">
    <property type="term" value="F:rRNA binding"/>
    <property type="evidence" value="ECO:0007669"/>
    <property type="project" value="UniProtKB-UniRule"/>
</dbReference>
<dbReference type="GO" id="GO:0003743">
    <property type="term" value="F:translation initiation factor activity"/>
    <property type="evidence" value="ECO:0007669"/>
    <property type="project" value="UniProtKB-UniRule"/>
</dbReference>
<dbReference type="CDD" id="cd04451">
    <property type="entry name" value="S1_IF1"/>
    <property type="match status" value="1"/>
</dbReference>
<dbReference type="FunFam" id="2.40.50.140:FF:000002">
    <property type="entry name" value="Translation initiation factor IF-1"/>
    <property type="match status" value="1"/>
</dbReference>
<dbReference type="Gene3D" id="2.40.50.140">
    <property type="entry name" value="Nucleic acid-binding proteins"/>
    <property type="match status" value="1"/>
</dbReference>
<dbReference type="HAMAP" id="MF_00075">
    <property type="entry name" value="IF_1"/>
    <property type="match status" value="1"/>
</dbReference>
<dbReference type="InterPro" id="IPR012340">
    <property type="entry name" value="NA-bd_OB-fold"/>
</dbReference>
<dbReference type="InterPro" id="IPR006196">
    <property type="entry name" value="RNA-binding_domain_S1_IF1"/>
</dbReference>
<dbReference type="InterPro" id="IPR003029">
    <property type="entry name" value="S1_domain"/>
</dbReference>
<dbReference type="InterPro" id="IPR004368">
    <property type="entry name" value="TIF_IF1"/>
</dbReference>
<dbReference type="NCBIfam" id="TIGR00008">
    <property type="entry name" value="infA"/>
    <property type="match status" value="1"/>
</dbReference>
<dbReference type="PANTHER" id="PTHR33370">
    <property type="entry name" value="TRANSLATION INITIATION FACTOR IF-1, CHLOROPLASTIC"/>
    <property type="match status" value="1"/>
</dbReference>
<dbReference type="PANTHER" id="PTHR33370:SF1">
    <property type="entry name" value="TRANSLATION INITIATION FACTOR IF-1, CHLOROPLASTIC"/>
    <property type="match status" value="1"/>
</dbReference>
<dbReference type="Pfam" id="PF01176">
    <property type="entry name" value="eIF-1a"/>
    <property type="match status" value="1"/>
</dbReference>
<dbReference type="SMART" id="SM00316">
    <property type="entry name" value="S1"/>
    <property type="match status" value="1"/>
</dbReference>
<dbReference type="SUPFAM" id="SSF50249">
    <property type="entry name" value="Nucleic acid-binding proteins"/>
    <property type="match status" value="1"/>
</dbReference>
<dbReference type="PROSITE" id="PS50832">
    <property type="entry name" value="S1_IF1_TYPE"/>
    <property type="match status" value="1"/>
</dbReference>
<name>IF1_YERP3</name>
<gene>
    <name evidence="1" type="primary">infA</name>
    <name type="ordered locus">YpsIP31758_2604</name>
</gene>
<feature type="chain" id="PRO_0000338953" description="Translation initiation factor IF-1">
    <location>
        <begin position="1"/>
        <end position="72"/>
    </location>
</feature>
<feature type="domain" description="S1-like" evidence="1">
    <location>
        <begin position="1"/>
        <end position="72"/>
    </location>
</feature>
<keyword id="KW-0963">Cytoplasm</keyword>
<keyword id="KW-0396">Initiation factor</keyword>
<keyword id="KW-0648">Protein biosynthesis</keyword>
<keyword id="KW-0694">RNA-binding</keyword>
<keyword id="KW-0699">rRNA-binding</keyword>
<sequence>MAKEDNIEMQGTVLDTLPNTMFRVELENGHVVTAHISGKMRKNYIRILTGDKVTVELTPYDLSKGRIVFRSR</sequence>
<comment type="function">
    <text evidence="1">One of the essential components for the initiation of protein synthesis. Stabilizes the binding of IF-2 and IF-3 on the 30S subunit to which N-formylmethionyl-tRNA(fMet) subsequently binds. Helps modulate mRNA selection, yielding the 30S pre-initiation complex (PIC). Upon addition of the 50S ribosomal subunit IF-1, IF-2 and IF-3 are released leaving the mature 70S translation initiation complex.</text>
</comment>
<comment type="subunit">
    <text evidence="1">Component of the 30S ribosomal translation pre-initiation complex which assembles on the 30S ribosome in the order IF-2 and IF-3, IF-1 and N-formylmethionyl-tRNA(fMet); mRNA recruitment can occur at any time during PIC assembly.</text>
</comment>
<comment type="subcellular location">
    <subcellularLocation>
        <location evidence="1">Cytoplasm</location>
    </subcellularLocation>
</comment>
<comment type="similarity">
    <text evidence="1">Belongs to the IF-1 family.</text>
</comment>
<accession>A7FJZ1</accession>
<evidence type="ECO:0000255" key="1">
    <source>
        <dbReference type="HAMAP-Rule" id="MF_00075"/>
    </source>
</evidence>
<protein>
    <recommendedName>
        <fullName evidence="1">Translation initiation factor IF-1</fullName>
    </recommendedName>
</protein>
<reference key="1">
    <citation type="journal article" date="2007" name="PLoS Genet.">
        <title>The complete genome sequence of Yersinia pseudotuberculosis IP31758, the causative agent of Far East scarlet-like fever.</title>
        <authorList>
            <person name="Eppinger M."/>
            <person name="Rosovitz M.J."/>
            <person name="Fricke W.F."/>
            <person name="Rasko D.A."/>
            <person name="Kokorina G."/>
            <person name="Fayolle C."/>
            <person name="Lindler L.E."/>
            <person name="Carniel E."/>
            <person name="Ravel J."/>
        </authorList>
    </citation>
    <scope>NUCLEOTIDE SEQUENCE [LARGE SCALE GENOMIC DNA]</scope>
    <source>
        <strain>IP 31758</strain>
    </source>
</reference>
<proteinExistence type="inferred from homology"/>
<organism>
    <name type="scientific">Yersinia pseudotuberculosis serotype O:1b (strain IP 31758)</name>
    <dbReference type="NCBI Taxonomy" id="349747"/>
    <lineage>
        <taxon>Bacteria</taxon>
        <taxon>Pseudomonadati</taxon>
        <taxon>Pseudomonadota</taxon>
        <taxon>Gammaproteobacteria</taxon>
        <taxon>Enterobacterales</taxon>
        <taxon>Yersiniaceae</taxon>
        <taxon>Yersinia</taxon>
    </lineage>
</organism>